<reference key="1">
    <citation type="journal article" date="2006" name="PLoS Genet.">
        <title>Secrets of soil survival revealed by the genome sequence of Arthrobacter aurescens TC1.</title>
        <authorList>
            <person name="Mongodin E.F."/>
            <person name="Shapir N."/>
            <person name="Daugherty S.C."/>
            <person name="DeBoy R.T."/>
            <person name="Emerson J.B."/>
            <person name="Shvartzbeyn A."/>
            <person name="Radune D."/>
            <person name="Vamathevan J."/>
            <person name="Riggs F."/>
            <person name="Grinberg V."/>
            <person name="Khouri H.M."/>
            <person name="Wackett L.P."/>
            <person name="Nelson K.E."/>
            <person name="Sadowsky M.J."/>
        </authorList>
    </citation>
    <scope>NUCLEOTIDE SEQUENCE [LARGE SCALE GENOMIC DNA]</scope>
    <source>
        <strain>TC1</strain>
    </source>
</reference>
<organism>
    <name type="scientific">Paenarthrobacter aurescens (strain TC1)</name>
    <dbReference type="NCBI Taxonomy" id="290340"/>
    <lineage>
        <taxon>Bacteria</taxon>
        <taxon>Bacillati</taxon>
        <taxon>Actinomycetota</taxon>
        <taxon>Actinomycetes</taxon>
        <taxon>Micrococcales</taxon>
        <taxon>Micrococcaceae</taxon>
        <taxon>Paenarthrobacter</taxon>
    </lineage>
</organism>
<evidence type="ECO:0000255" key="1">
    <source>
        <dbReference type="HAMAP-Rule" id="MF_01517"/>
    </source>
</evidence>
<comment type="function">
    <text evidence="1">Catalyzes the reversible oxidation of malate to oxaloacetate.</text>
</comment>
<comment type="catalytic activity">
    <reaction evidence="1">
        <text>(S)-malate + NAD(+) = oxaloacetate + NADH + H(+)</text>
        <dbReference type="Rhea" id="RHEA:21432"/>
        <dbReference type="ChEBI" id="CHEBI:15378"/>
        <dbReference type="ChEBI" id="CHEBI:15589"/>
        <dbReference type="ChEBI" id="CHEBI:16452"/>
        <dbReference type="ChEBI" id="CHEBI:57540"/>
        <dbReference type="ChEBI" id="CHEBI:57945"/>
        <dbReference type="EC" id="1.1.1.37"/>
    </reaction>
</comment>
<comment type="similarity">
    <text evidence="1">Belongs to the LDH/MDH superfamily. MDH type 2 family.</text>
</comment>
<proteinExistence type="inferred from homology"/>
<gene>
    <name evidence="1" type="primary">mdh</name>
    <name type="ordered locus">AAur_0570</name>
</gene>
<keyword id="KW-0520">NAD</keyword>
<keyword id="KW-0560">Oxidoreductase</keyword>
<keyword id="KW-0816">Tricarboxylic acid cycle</keyword>
<protein>
    <recommendedName>
        <fullName evidence="1">Malate dehydrogenase</fullName>
        <ecNumber evidence="1">1.1.1.37</ecNumber>
    </recommendedName>
</protein>
<accession>A1R2B5</accession>
<dbReference type="EC" id="1.1.1.37" evidence="1"/>
<dbReference type="EMBL" id="CP000474">
    <property type="protein sequence ID" value="ABM08217.1"/>
    <property type="molecule type" value="Genomic_DNA"/>
</dbReference>
<dbReference type="RefSeq" id="WP_011773325.1">
    <property type="nucleotide sequence ID" value="NC_008711.1"/>
</dbReference>
<dbReference type="SMR" id="A1R2B5"/>
<dbReference type="STRING" id="290340.AAur_0570"/>
<dbReference type="KEGG" id="aau:AAur_0570"/>
<dbReference type="eggNOG" id="COG0039">
    <property type="taxonomic scope" value="Bacteria"/>
</dbReference>
<dbReference type="HOGENOM" id="CLU_040727_2_0_11"/>
<dbReference type="OrthoDB" id="9802969at2"/>
<dbReference type="Proteomes" id="UP000000637">
    <property type="component" value="Chromosome"/>
</dbReference>
<dbReference type="GO" id="GO:0030060">
    <property type="term" value="F:L-malate dehydrogenase (NAD+) activity"/>
    <property type="evidence" value="ECO:0007669"/>
    <property type="project" value="UniProtKB-UniRule"/>
</dbReference>
<dbReference type="GO" id="GO:0006108">
    <property type="term" value="P:malate metabolic process"/>
    <property type="evidence" value="ECO:0007669"/>
    <property type="project" value="InterPro"/>
</dbReference>
<dbReference type="GO" id="GO:0006099">
    <property type="term" value="P:tricarboxylic acid cycle"/>
    <property type="evidence" value="ECO:0007669"/>
    <property type="project" value="UniProtKB-UniRule"/>
</dbReference>
<dbReference type="CDD" id="cd01338">
    <property type="entry name" value="MDH_chloroplast-like"/>
    <property type="match status" value="1"/>
</dbReference>
<dbReference type="FunFam" id="3.40.50.720:FF:000010">
    <property type="entry name" value="Malate dehydrogenase"/>
    <property type="match status" value="1"/>
</dbReference>
<dbReference type="FunFam" id="3.90.110.10:FF:000002">
    <property type="entry name" value="Malate dehydrogenase"/>
    <property type="match status" value="1"/>
</dbReference>
<dbReference type="Gene3D" id="3.90.110.10">
    <property type="entry name" value="Lactate dehydrogenase/glycoside hydrolase, family 4, C-terminal"/>
    <property type="match status" value="1"/>
</dbReference>
<dbReference type="Gene3D" id="3.40.50.720">
    <property type="entry name" value="NAD(P)-binding Rossmann-like Domain"/>
    <property type="match status" value="1"/>
</dbReference>
<dbReference type="HAMAP" id="MF_01517">
    <property type="entry name" value="Malate_dehydrog_2"/>
    <property type="match status" value="1"/>
</dbReference>
<dbReference type="InterPro" id="IPR001557">
    <property type="entry name" value="L-lactate/malate_DH"/>
</dbReference>
<dbReference type="InterPro" id="IPR022383">
    <property type="entry name" value="Lactate/malate_DH_C"/>
</dbReference>
<dbReference type="InterPro" id="IPR001236">
    <property type="entry name" value="Lactate/malate_DH_N"/>
</dbReference>
<dbReference type="InterPro" id="IPR015955">
    <property type="entry name" value="Lactate_DH/Glyco_Ohase_4_C"/>
</dbReference>
<dbReference type="InterPro" id="IPR001252">
    <property type="entry name" value="Malate_DH_AS"/>
</dbReference>
<dbReference type="InterPro" id="IPR010945">
    <property type="entry name" value="Malate_DH_type2"/>
</dbReference>
<dbReference type="InterPro" id="IPR036291">
    <property type="entry name" value="NAD(P)-bd_dom_sf"/>
</dbReference>
<dbReference type="NCBIfam" id="TIGR01759">
    <property type="entry name" value="MalateDH-SF1"/>
    <property type="match status" value="1"/>
</dbReference>
<dbReference type="NCBIfam" id="NF003916">
    <property type="entry name" value="PRK05442.1"/>
    <property type="match status" value="1"/>
</dbReference>
<dbReference type="PANTHER" id="PTHR23382">
    <property type="entry name" value="MALATE DEHYDROGENASE"/>
    <property type="match status" value="1"/>
</dbReference>
<dbReference type="Pfam" id="PF02866">
    <property type="entry name" value="Ldh_1_C"/>
    <property type="match status" value="1"/>
</dbReference>
<dbReference type="Pfam" id="PF00056">
    <property type="entry name" value="Ldh_1_N"/>
    <property type="match status" value="1"/>
</dbReference>
<dbReference type="PIRSF" id="PIRSF000102">
    <property type="entry name" value="Lac_mal_DH"/>
    <property type="match status" value="1"/>
</dbReference>
<dbReference type="SUPFAM" id="SSF56327">
    <property type="entry name" value="LDH C-terminal domain-like"/>
    <property type="match status" value="1"/>
</dbReference>
<dbReference type="SUPFAM" id="SSF51735">
    <property type="entry name" value="NAD(P)-binding Rossmann-fold domains"/>
    <property type="match status" value="1"/>
</dbReference>
<dbReference type="PROSITE" id="PS00068">
    <property type="entry name" value="MDH"/>
    <property type="match status" value="1"/>
</dbReference>
<feature type="chain" id="PRO_0000292368" description="Malate dehydrogenase">
    <location>
        <begin position="1"/>
        <end position="328"/>
    </location>
</feature>
<feature type="active site" description="Proton acceptor" evidence="1">
    <location>
        <position position="187"/>
    </location>
</feature>
<feature type="binding site" evidence="1">
    <location>
        <begin position="11"/>
        <end position="17"/>
    </location>
    <ligand>
        <name>NAD(+)</name>
        <dbReference type="ChEBI" id="CHEBI:57540"/>
    </ligand>
</feature>
<feature type="binding site" evidence="1">
    <location>
        <position position="92"/>
    </location>
    <ligand>
        <name>substrate</name>
    </ligand>
</feature>
<feature type="binding site" evidence="1">
    <location>
        <position position="98"/>
    </location>
    <ligand>
        <name>substrate</name>
    </ligand>
</feature>
<feature type="binding site" evidence="1">
    <location>
        <position position="105"/>
    </location>
    <ligand>
        <name>NAD(+)</name>
        <dbReference type="ChEBI" id="CHEBI:57540"/>
    </ligand>
</feature>
<feature type="binding site" evidence="1">
    <location>
        <position position="112"/>
    </location>
    <ligand>
        <name>NAD(+)</name>
        <dbReference type="ChEBI" id="CHEBI:57540"/>
    </ligand>
</feature>
<feature type="binding site" evidence="1">
    <location>
        <begin position="129"/>
        <end position="131"/>
    </location>
    <ligand>
        <name>NAD(+)</name>
        <dbReference type="ChEBI" id="CHEBI:57540"/>
    </ligand>
</feature>
<feature type="binding site" evidence="1">
    <location>
        <position position="131"/>
    </location>
    <ligand>
        <name>substrate</name>
    </ligand>
</feature>
<feature type="binding site" evidence="1">
    <location>
        <position position="162"/>
    </location>
    <ligand>
        <name>substrate</name>
    </ligand>
</feature>
<name>MDH_PAEAT</name>
<sequence>MSSPIKIAVTGAAGQIGYSLLFRIASGALFGGDTPVQLRLLEITPALKALEGVVMELDDCAFPALDSVEIGDDADHIFDGVTLALLVGARPRSKGMERGDLLSANGAIFTAQGKALNRVAADDVRIGVTGNPANTNALIAMSNAPDIPASRFSALTRLDHNRAIGQLAAKTHARVGDIRKMTVWGNHSATQYPDIFHAEVAGRNAAEVVNDQDWIENEFIPTVAGRGAAIIEARGASSAASAASATIDAARDWLLGTPEGDWVSMAVASDGSYGVPEGLMYSYPVTTSGGNWEIVEGLEVNDFSRRKMDATAAELFDERAAVANLGLI</sequence>